<protein>
    <recommendedName>
        <fullName evidence="1">Glutamate racemase</fullName>
        <ecNumber evidence="1">5.1.1.3</ecNumber>
    </recommendedName>
</protein>
<name>MURI_HYDS0</name>
<accession>B4UA20</accession>
<feature type="chain" id="PRO_1000114050" description="Glutamate racemase">
    <location>
        <begin position="1"/>
        <end position="259"/>
    </location>
</feature>
<feature type="active site" description="Proton donor/acceptor" evidence="1">
    <location>
        <position position="70"/>
    </location>
</feature>
<feature type="active site" description="Proton donor/acceptor" evidence="1">
    <location>
        <position position="180"/>
    </location>
</feature>
<feature type="binding site" evidence="1">
    <location>
        <begin position="7"/>
        <end position="8"/>
    </location>
    <ligand>
        <name>substrate</name>
    </ligand>
</feature>
<feature type="binding site" evidence="1">
    <location>
        <begin position="39"/>
        <end position="40"/>
    </location>
    <ligand>
        <name>substrate</name>
    </ligand>
</feature>
<feature type="binding site" evidence="1">
    <location>
        <begin position="71"/>
        <end position="72"/>
    </location>
    <ligand>
        <name>substrate</name>
    </ligand>
</feature>
<feature type="binding site" evidence="1">
    <location>
        <begin position="181"/>
        <end position="182"/>
    </location>
    <ligand>
        <name>substrate</name>
    </ligand>
</feature>
<organism>
    <name type="scientific">Hydrogenobaculum sp. (strain Y04AAS1)</name>
    <dbReference type="NCBI Taxonomy" id="380749"/>
    <lineage>
        <taxon>Bacteria</taxon>
        <taxon>Pseudomonadati</taxon>
        <taxon>Aquificota</taxon>
        <taxon>Aquificia</taxon>
        <taxon>Aquificales</taxon>
        <taxon>Aquificaceae</taxon>
        <taxon>Hydrogenobaculum</taxon>
    </lineage>
</organism>
<proteinExistence type="inferred from homology"/>
<comment type="function">
    <text evidence="1">Provides the (R)-glutamate required for cell wall biosynthesis.</text>
</comment>
<comment type="catalytic activity">
    <reaction evidence="1">
        <text>L-glutamate = D-glutamate</text>
        <dbReference type="Rhea" id="RHEA:12813"/>
        <dbReference type="ChEBI" id="CHEBI:29985"/>
        <dbReference type="ChEBI" id="CHEBI:29986"/>
        <dbReference type="EC" id="5.1.1.3"/>
    </reaction>
</comment>
<comment type="pathway">
    <text evidence="1">Cell wall biogenesis; peptidoglycan biosynthesis.</text>
</comment>
<comment type="similarity">
    <text evidence="1">Belongs to the aspartate/glutamate racemases family.</text>
</comment>
<reference key="1">
    <citation type="journal article" date="2009" name="J. Bacteriol.">
        <title>Complete and draft genome sequences of six members of the Aquificales.</title>
        <authorList>
            <person name="Reysenbach A.-L."/>
            <person name="Hamamura N."/>
            <person name="Podar M."/>
            <person name="Griffiths E."/>
            <person name="Ferreira S."/>
            <person name="Hochstein R."/>
            <person name="Heidelberg J."/>
            <person name="Johnson J."/>
            <person name="Mead D."/>
            <person name="Pohorille A."/>
            <person name="Sarmiento M."/>
            <person name="Schweighofer K."/>
            <person name="Seshadri R."/>
            <person name="Voytek M.A."/>
        </authorList>
    </citation>
    <scope>NUCLEOTIDE SEQUENCE [LARGE SCALE GENOMIC DNA]</scope>
    <source>
        <strain>Y04AAS1</strain>
    </source>
</reference>
<keyword id="KW-0133">Cell shape</keyword>
<keyword id="KW-0961">Cell wall biogenesis/degradation</keyword>
<keyword id="KW-0413">Isomerase</keyword>
<keyword id="KW-0573">Peptidoglycan synthesis</keyword>
<sequence>MKIGMFDSGVGGLTVLKSVRKVYDKVDIVYLGDTARVPYGIKSKETIITYAKESANFLINQNVDVILIACNSVSANAMEALQEMFDIPIVGVIEAGVEAALKSSKTKHVGIIGTSATINSNKYQERLEAFNIKTYAKACPLFVPIVEEKLINTDISKKAVEFYLKEFKDLKDIDTLILGCTHYPLLEEDIKAFLPHINLVSSSDAIISYINNIVKNEGNATTELYFTDISQNTSELVEYIMGQKYDLKYVNVESLALNC</sequence>
<gene>
    <name evidence="1" type="primary">murI</name>
    <name type="ordered locus">HY04AAS1_1296</name>
</gene>
<evidence type="ECO:0000255" key="1">
    <source>
        <dbReference type="HAMAP-Rule" id="MF_00258"/>
    </source>
</evidence>
<dbReference type="EC" id="5.1.1.3" evidence="1"/>
<dbReference type="EMBL" id="CP001130">
    <property type="protein sequence ID" value="ACG57981.1"/>
    <property type="molecule type" value="Genomic_DNA"/>
</dbReference>
<dbReference type="RefSeq" id="WP_012514337.1">
    <property type="nucleotide sequence ID" value="NC_011126.1"/>
</dbReference>
<dbReference type="SMR" id="B4UA20"/>
<dbReference type="STRING" id="380749.HY04AAS1_1296"/>
<dbReference type="KEGG" id="hya:HY04AAS1_1296"/>
<dbReference type="eggNOG" id="COG0796">
    <property type="taxonomic scope" value="Bacteria"/>
</dbReference>
<dbReference type="HOGENOM" id="CLU_052344_0_2_0"/>
<dbReference type="OrthoDB" id="9801055at2"/>
<dbReference type="UniPathway" id="UPA00219"/>
<dbReference type="GO" id="GO:0008881">
    <property type="term" value="F:glutamate racemase activity"/>
    <property type="evidence" value="ECO:0007669"/>
    <property type="project" value="UniProtKB-UniRule"/>
</dbReference>
<dbReference type="GO" id="GO:0071555">
    <property type="term" value="P:cell wall organization"/>
    <property type="evidence" value="ECO:0007669"/>
    <property type="project" value="UniProtKB-KW"/>
</dbReference>
<dbReference type="GO" id="GO:0009252">
    <property type="term" value="P:peptidoglycan biosynthetic process"/>
    <property type="evidence" value="ECO:0007669"/>
    <property type="project" value="UniProtKB-UniRule"/>
</dbReference>
<dbReference type="GO" id="GO:0008360">
    <property type="term" value="P:regulation of cell shape"/>
    <property type="evidence" value="ECO:0007669"/>
    <property type="project" value="UniProtKB-KW"/>
</dbReference>
<dbReference type="FunFam" id="3.40.50.1860:FF:000001">
    <property type="entry name" value="Glutamate racemase"/>
    <property type="match status" value="1"/>
</dbReference>
<dbReference type="Gene3D" id="3.40.50.1860">
    <property type="match status" value="2"/>
</dbReference>
<dbReference type="HAMAP" id="MF_00258">
    <property type="entry name" value="Glu_racemase"/>
    <property type="match status" value="1"/>
</dbReference>
<dbReference type="InterPro" id="IPR015942">
    <property type="entry name" value="Asp/Glu/hydantoin_racemase"/>
</dbReference>
<dbReference type="InterPro" id="IPR001920">
    <property type="entry name" value="Asp/Glu_race"/>
</dbReference>
<dbReference type="InterPro" id="IPR033134">
    <property type="entry name" value="Asp/Glu_racemase_AS_2"/>
</dbReference>
<dbReference type="InterPro" id="IPR004391">
    <property type="entry name" value="Glu_race"/>
</dbReference>
<dbReference type="NCBIfam" id="TIGR00067">
    <property type="entry name" value="glut_race"/>
    <property type="match status" value="1"/>
</dbReference>
<dbReference type="PANTHER" id="PTHR21198">
    <property type="entry name" value="GLUTAMATE RACEMASE"/>
    <property type="match status" value="1"/>
</dbReference>
<dbReference type="PANTHER" id="PTHR21198:SF2">
    <property type="entry name" value="GLUTAMATE RACEMASE"/>
    <property type="match status" value="1"/>
</dbReference>
<dbReference type="Pfam" id="PF01177">
    <property type="entry name" value="Asp_Glu_race"/>
    <property type="match status" value="1"/>
</dbReference>
<dbReference type="SUPFAM" id="SSF53681">
    <property type="entry name" value="Aspartate/glutamate racemase"/>
    <property type="match status" value="2"/>
</dbReference>
<dbReference type="PROSITE" id="PS00924">
    <property type="entry name" value="ASP_GLU_RACEMASE_2"/>
    <property type="match status" value="1"/>
</dbReference>